<accession>Q0TL74</accession>
<proteinExistence type="inferred from homology"/>
<dbReference type="EC" id="2.7.2.11" evidence="1"/>
<dbReference type="EMBL" id="CP000247">
    <property type="protein sequence ID" value="ABG68307.1"/>
    <property type="molecule type" value="Genomic_DNA"/>
</dbReference>
<dbReference type="RefSeq" id="WP_001285288.1">
    <property type="nucleotide sequence ID" value="NC_008253.1"/>
</dbReference>
<dbReference type="SMR" id="Q0TL74"/>
<dbReference type="GeneID" id="93777151"/>
<dbReference type="KEGG" id="ecp:ECP_0271"/>
<dbReference type="HOGENOM" id="CLU_025400_2_0_6"/>
<dbReference type="UniPathway" id="UPA00098">
    <property type="reaction ID" value="UER00359"/>
</dbReference>
<dbReference type="Proteomes" id="UP000009182">
    <property type="component" value="Chromosome"/>
</dbReference>
<dbReference type="GO" id="GO:0005829">
    <property type="term" value="C:cytosol"/>
    <property type="evidence" value="ECO:0007669"/>
    <property type="project" value="TreeGrafter"/>
</dbReference>
<dbReference type="GO" id="GO:0005524">
    <property type="term" value="F:ATP binding"/>
    <property type="evidence" value="ECO:0007669"/>
    <property type="project" value="UniProtKB-KW"/>
</dbReference>
<dbReference type="GO" id="GO:0004349">
    <property type="term" value="F:glutamate 5-kinase activity"/>
    <property type="evidence" value="ECO:0007669"/>
    <property type="project" value="UniProtKB-UniRule"/>
</dbReference>
<dbReference type="GO" id="GO:0003723">
    <property type="term" value="F:RNA binding"/>
    <property type="evidence" value="ECO:0007669"/>
    <property type="project" value="InterPro"/>
</dbReference>
<dbReference type="GO" id="GO:0055129">
    <property type="term" value="P:L-proline biosynthetic process"/>
    <property type="evidence" value="ECO:0007669"/>
    <property type="project" value="UniProtKB-UniRule"/>
</dbReference>
<dbReference type="CDD" id="cd04242">
    <property type="entry name" value="AAK_G5K_ProB"/>
    <property type="match status" value="1"/>
</dbReference>
<dbReference type="CDD" id="cd21157">
    <property type="entry name" value="PUA_G5K"/>
    <property type="match status" value="1"/>
</dbReference>
<dbReference type="FunFam" id="2.30.130.10:FF:000003">
    <property type="entry name" value="Glutamate 5-kinase"/>
    <property type="match status" value="1"/>
</dbReference>
<dbReference type="FunFam" id="3.40.1160.10:FF:000006">
    <property type="entry name" value="Glutamate 5-kinase"/>
    <property type="match status" value="1"/>
</dbReference>
<dbReference type="Gene3D" id="3.40.1160.10">
    <property type="entry name" value="Acetylglutamate kinase-like"/>
    <property type="match status" value="2"/>
</dbReference>
<dbReference type="Gene3D" id="2.30.130.10">
    <property type="entry name" value="PUA domain"/>
    <property type="match status" value="1"/>
</dbReference>
<dbReference type="HAMAP" id="MF_00456">
    <property type="entry name" value="ProB"/>
    <property type="match status" value="1"/>
</dbReference>
<dbReference type="InterPro" id="IPR036393">
    <property type="entry name" value="AceGlu_kinase-like_sf"/>
</dbReference>
<dbReference type="InterPro" id="IPR001048">
    <property type="entry name" value="Asp/Glu/Uridylate_kinase"/>
</dbReference>
<dbReference type="InterPro" id="IPR041739">
    <property type="entry name" value="G5K_ProB"/>
</dbReference>
<dbReference type="InterPro" id="IPR001057">
    <property type="entry name" value="Glu/AcGlu_kinase"/>
</dbReference>
<dbReference type="InterPro" id="IPR011529">
    <property type="entry name" value="Glu_5kinase"/>
</dbReference>
<dbReference type="InterPro" id="IPR005715">
    <property type="entry name" value="Glu_5kinase/COase_Synthase"/>
</dbReference>
<dbReference type="InterPro" id="IPR019797">
    <property type="entry name" value="Glutamate_5-kinase_CS"/>
</dbReference>
<dbReference type="InterPro" id="IPR002478">
    <property type="entry name" value="PUA"/>
</dbReference>
<dbReference type="InterPro" id="IPR015947">
    <property type="entry name" value="PUA-like_sf"/>
</dbReference>
<dbReference type="InterPro" id="IPR036974">
    <property type="entry name" value="PUA_sf"/>
</dbReference>
<dbReference type="NCBIfam" id="TIGR01027">
    <property type="entry name" value="proB"/>
    <property type="match status" value="1"/>
</dbReference>
<dbReference type="PANTHER" id="PTHR43654">
    <property type="entry name" value="GLUTAMATE 5-KINASE"/>
    <property type="match status" value="1"/>
</dbReference>
<dbReference type="PANTHER" id="PTHR43654:SF1">
    <property type="entry name" value="ISOPENTENYL PHOSPHATE KINASE"/>
    <property type="match status" value="1"/>
</dbReference>
<dbReference type="Pfam" id="PF00696">
    <property type="entry name" value="AA_kinase"/>
    <property type="match status" value="1"/>
</dbReference>
<dbReference type="Pfam" id="PF01472">
    <property type="entry name" value="PUA"/>
    <property type="match status" value="1"/>
</dbReference>
<dbReference type="PIRSF" id="PIRSF000729">
    <property type="entry name" value="GK"/>
    <property type="match status" value="1"/>
</dbReference>
<dbReference type="PRINTS" id="PR00474">
    <property type="entry name" value="GLU5KINASE"/>
</dbReference>
<dbReference type="SMART" id="SM00359">
    <property type="entry name" value="PUA"/>
    <property type="match status" value="1"/>
</dbReference>
<dbReference type="SUPFAM" id="SSF53633">
    <property type="entry name" value="Carbamate kinase-like"/>
    <property type="match status" value="1"/>
</dbReference>
<dbReference type="SUPFAM" id="SSF88697">
    <property type="entry name" value="PUA domain-like"/>
    <property type="match status" value="1"/>
</dbReference>
<dbReference type="PROSITE" id="PS00902">
    <property type="entry name" value="GLUTAMATE_5_KINASE"/>
    <property type="match status" value="1"/>
</dbReference>
<dbReference type="PROSITE" id="PS50890">
    <property type="entry name" value="PUA"/>
    <property type="match status" value="1"/>
</dbReference>
<reference key="1">
    <citation type="journal article" date="2006" name="Mol. Microbiol.">
        <title>Role of pathogenicity island-associated integrases in the genome plasticity of uropathogenic Escherichia coli strain 536.</title>
        <authorList>
            <person name="Hochhut B."/>
            <person name="Wilde C."/>
            <person name="Balling G."/>
            <person name="Middendorf B."/>
            <person name="Dobrindt U."/>
            <person name="Brzuszkiewicz E."/>
            <person name="Gottschalk G."/>
            <person name="Carniel E."/>
            <person name="Hacker J."/>
        </authorList>
    </citation>
    <scope>NUCLEOTIDE SEQUENCE [LARGE SCALE GENOMIC DNA]</scope>
    <source>
        <strain>536 / UPEC</strain>
    </source>
</reference>
<comment type="function">
    <text evidence="1">Catalyzes the transfer of a phosphate group to glutamate to form L-glutamate 5-phosphate.</text>
</comment>
<comment type="catalytic activity">
    <reaction evidence="1">
        <text>L-glutamate + ATP = L-glutamyl 5-phosphate + ADP</text>
        <dbReference type="Rhea" id="RHEA:14877"/>
        <dbReference type="ChEBI" id="CHEBI:29985"/>
        <dbReference type="ChEBI" id="CHEBI:30616"/>
        <dbReference type="ChEBI" id="CHEBI:58274"/>
        <dbReference type="ChEBI" id="CHEBI:456216"/>
        <dbReference type="EC" id="2.7.2.11"/>
    </reaction>
</comment>
<comment type="pathway">
    <text evidence="1">Amino-acid biosynthesis; L-proline biosynthesis; L-glutamate 5-semialdehyde from L-glutamate: step 1/2.</text>
</comment>
<comment type="subcellular location">
    <subcellularLocation>
        <location evidence="1">Cytoplasm</location>
    </subcellularLocation>
</comment>
<comment type="similarity">
    <text evidence="1">Belongs to the glutamate 5-kinase family.</text>
</comment>
<evidence type="ECO:0000255" key="1">
    <source>
        <dbReference type="HAMAP-Rule" id="MF_00456"/>
    </source>
</evidence>
<feature type="chain" id="PRO_0000252979" description="Glutamate 5-kinase">
    <location>
        <begin position="1"/>
        <end position="367"/>
    </location>
</feature>
<feature type="domain" description="PUA" evidence="1">
    <location>
        <begin position="275"/>
        <end position="353"/>
    </location>
</feature>
<feature type="binding site" evidence="1">
    <location>
        <position position="10"/>
    </location>
    <ligand>
        <name>ATP</name>
        <dbReference type="ChEBI" id="CHEBI:30616"/>
    </ligand>
</feature>
<feature type="binding site" evidence="1">
    <location>
        <position position="50"/>
    </location>
    <ligand>
        <name>substrate</name>
    </ligand>
</feature>
<feature type="binding site" evidence="1">
    <location>
        <position position="137"/>
    </location>
    <ligand>
        <name>substrate</name>
    </ligand>
</feature>
<feature type="binding site" evidence="1">
    <location>
        <position position="149"/>
    </location>
    <ligand>
        <name>substrate</name>
    </ligand>
</feature>
<feature type="binding site" evidence="1">
    <location>
        <begin position="169"/>
        <end position="170"/>
    </location>
    <ligand>
        <name>ATP</name>
        <dbReference type="ChEBI" id="CHEBI:30616"/>
    </ligand>
</feature>
<feature type="binding site" evidence="1">
    <location>
        <begin position="211"/>
        <end position="217"/>
    </location>
    <ligand>
        <name>ATP</name>
        <dbReference type="ChEBI" id="CHEBI:30616"/>
    </ligand>
</feature>
<organism>
    <name type="scientific">Escherichia coli O6:K15:H31 (strain 536 / UPEC)</name>
    <dbReference type="NCBI Taxonomy" id="362663"/>
    <lineage>
        <taxon>Bacteria</taxon>
        <taxon>Pseudomonadati</taxon>
        <taxon>Pseudomonadota</taxon>
        <taxon>Gammaproteobacteria</taxon>
        <taxon>Enterobacterales</taxon>
        <taxon>Enterobacteriaceae</taxon>
        <taxon>Escherichia</taxon>
    </lineage>
</organism>
<protein>
    <recommendedName>
        <fullName evidence="1">Glutamate 5-kinase</fullName>
        <ecNumber evidence="1">2.7.2.11</ecNumber>
    </recommendedName>
    <alternativeName>
        <fullName evidence="1">Gamma-glutamyl kinase</fullName>
        <shortName evidence="1">GK</shortName>
    </alternativeName>
</protein>
<name>PROB_ECOL5</name>
<keyword id="KW-0028">Amino-acid biosynthesis</keyword>
<keyword id="KW-0067">ATP-binding</keyword>
<keyword id="KW-0963">Cytoplasm</keyword>
<keyword id="KW-0418">Kinase</keyword>
<keyword id="KW-0547">Nucleotide-binding</keyword>
<keyword id="KW-0641">Proline biosynthesis</keyword>
<keyword id="KW-0808">Transferase</keyword>
<gene>
    <name evidence="1" type="primary">proB</name>
    <name type="ordered locus">ECP_0271</name>
</gene>
<sequence>MSDSQTLVVKLGTSVLTGGSRRLNRAHIVELVRQCAQLHAAGHRIVIVTSGAIAAGREHLGYPELPATIASKQLLAAVGQSRLIQLWEQLFSIYGIHVGQMLLTRADMEDRERFLNARDTLRALLDNNIVPVINENDAVATAEIKVGDNDNLSALAAILAGADKLLLLTDQKGLYTADPRSNPQAELIKDVYGIDDALRAIAGDSVSGLGTGGMSTKLQAADVACRAGIDTIIAAGSKPGVIGDVMEGISVGTLFHAQATPLENRKRWIFGAPPAGEITVDEGATAAILERGSSLLPKGIKSVTGNFSRGEVIRICNLEGRDIAHGVSRYNSDALRRIAGHHSQEIDAILGYEYGPVAVHRDDMITR</sequence>